<accession>A9A2Y3</accession>
<keyword id="KW-1185">Reference proteome</keyword>
<name>Y215_NITMS</name>
<gene>
    <name type="ordered locus">Nmar_0215</name>
</gene>
<reference key="1">
    <citation type="journal article" date="2010" name="Proc. Natl. Acad. Sci. U.S.A.">
        <title>Nitrosopumilus maritimus genome reveals unique mechanisms for nitrification and autotrophy in globally distributed marine crenarchaea.</title>
        <authorList>
            <person name="Walker C.B."/>
            <person name="de la Torre J.R."/>
            <person name="Klotz M.G."/>
            <person name="Urakawa H."/>
            <person name="Pinel N."/>
            <person name="Arp D.J."/>
            <person name="Brochier-Armanet C."/>
            <person name="Chain P.S."/>
            <person name="Chan P.P."/>
            <person name="Gollabgir A."/>
            <person name="Hemp J."/>
            <person name="Hugler M."/>
            <person name="Karr E.A."/>
            <person name="Konneke M."/>
            <person name="Shin M."/>
            <person name="Lawton T.J."/>
            <person name="Lowe T."/>
            <person name="Martens-Habbena W."/>
            <person name="Sayavedra-Soto L.A."/>
            <person name="Lang D."/>
            <person name="Sievert S.M."/>
            <person name="Rosenzweig A.C."/>
            <person name="Manning G."/>
            <person name="Stahl D.A."/>
        </authorList>
    </citation>
    <scope>NUCLEOTIDE SEQUENCE [LARGE SCALE GENOMIC DNA]</scope>
    <source>
        <strain>SCM1</strain>
    </source>
</reference>
<feature type="chain" id="PRO_1000091788" description="MEMO1 family protein Nmar_0215">
    <location>
        <begin position="1"/>
        <end position="275"/>
    </location>
</feature>
<protein>
    <recommendedName>
        <fullName evidence="1">MEMO1 family protein Nmar_0215</fullName>
    </recommendedName>
</protein>
<evidence type="ECO:0000255" key="1">
    <source>
        <dbReference type="HAMAP-Rule" id="MF_00055"/>
    </source>
</evidence>
<proteinExistence type="inferred from homology"/>
<sequence>MIRKPVVAGQFYPGTKNELEEMINSCIQHKFGPGNQIQNNEGIYGVISPHAGYVYSGPTACYSYKAISSKNPELVIILGPNHFGVGKDVATMVNAQWETPLGLVDVDSEAAKEIANNSKYIEIDEFSHSRDHSLEVQIPMLQSIFSEKFKILPIILRDQSLEMAKDVGNAVAQIAKSRNTMIVASSDFTHYEENSFAHSQDKALIEPILEMDVEKFYSVLMEKRVTACGYGAMASVMIACKNLGAVKGELLSYTTSGDVMGDTSSVVGYGAIKFI</sequence>
<dbReference type="EMBL" id="CP000866">
    <property type="protein sequence ID" value="ABX12111.1"/>
    <property type="molecule type" value="Genomic_DNA"/>
</dbReference>
<dbReference type="RefSeq" id="WP_012214598.1">
    <property type="nucleotide sequence ID" value="NC_010085.1"/>
</dbReference>
<dbReference type="SMR" id="A9A2Y3"/>
<dbReference type="FunCoup" id="A9A2Y3">
    <property type="interactions" value="53"/>
</dbReference>
<dbReference type="STRING" id="436308.Nmar_0215"/>
<dbReference type="EnsemblBacteria" id="ABX12111">
    <property type="protein sequence ID" value="ABX12111"/>
    <property type="gene ID" value="Nmar_0215"/>
</dbReference>
<dbReference type="GeneID" id="5774565"/>
<dbReference type="KEGG" id="nmr:Nmar_0215"/>
<dbReference type="eggNOG" id="arCOG01728">
    <property type="taxonomic scope" value="Archaea"/>
</dbReference>
<dbReference type="HOGENOM" id="CLU_038085_2_0_2"/>
<dbReference type="InParanoid" id="A9A2Y3"/>
<dbReference type="OrthoDB" id="372162at2157"/>
<dbReference type="PhylomeDB" id="A9A2Y3"/>
<dbReference type="Proteomes" id="UP000000792">
    <property type="component" value="Chromosome"/>
</dbReference>
<dbReference type="CDD" id="cd07361">
    <property type="entry name" value="MEMO_like"/>
    <property type="match status" value="1"/>
</dbReference>
<dbReference type="Gene3D" id="3.40.830.10">
    <property type="entry name" value="LigB-like"/>
    <property type="match status" value="1"/>
</dbReference>
<dbReference type="HAMAP" id="MF_00055">
    <property type="entry name" value="MEMO1"/>
    <property type="match status" value="1"/>
</dbReference>
<dbReference type="InterPro" id="IPR002737">
    <property type="entry name" value="MEMO1_fam"/>
</dbReference>
<dbReference type="NCBIfam" id="TIGR04336">
    <property type="entry name" value="AmmeMemoSam_B"/>
    <property type="match status" value="1"/>
</dbReference>
<dbReference type="NCBIfam" id="NF001987">
    <property type="entry name" value="PRK00782.1"/>
    <property type="match status" value="1"/>
</dbReference>
<dbReference type="PANTHER" id="PTHR11060">
    <property type="entry name" value="PROTEIN MEMO1"/>
    <property type="match status" value="1"/>
</dbReference>
<dbReference type="PANTHER" id="PTHR11060:SF0">
    <property type="entry name" value="PROTEIN MEMO1"/>
    <property type="match status" value="1"/>
</dbReference>
<dbReference type="Pfam" id="PF01875">
    <property type="entry name" value="Memo"/>
    <property type="match status" value="1"/>
</dbReference>
<dbReference type="SUPFAM" id="SSF53213">
    <property type="entry name" value="LigB-like"/>
    <property type="match status" value="1"/>
</dbReference>
<organism>
    <name type="scientific">Nitrosopumilus maritimus (strain SCM1)</name>
    <dbReference type="NCBI Taxonomy" id="436308"/>
    <lineage>
        <taxon>Archaea</taxon>
        <taxon>Nitrososphaerota</taxon>
        <taxon>Nitrososphaeria</taxon>
        <taxon>Nitrosopumilales</taxon>
        <taxon>Nitrosopumilaceae</taxon>
        <taxon>Nitrosopumilus</taxon>
    </lineage>
</organism>
<comment type="similarity">
    <text evidence="1">Belongs to the MEMO1 family.</text>
</comment>